<comment type="similarity">
    <text evidence="1">Belongs to the bacterial ribosomal protein bL33 family.</text>
</comment>
<keyword id="KW-0687">Ribonucleoprotein</keyword>
<keyword id="KW-0689">Ribosomal protein</keyword>
<gene>
    <name evidence="1" type="primary">rpmG2</name>
    <name type="ordered locus">SAS1275</name>
</gene>
<proteinExistence type="inferred from homology"/>
<protein>
    <recommendedName>
        <fullName evidence="1">Large ribosomal subunit protein bL33B</fullName>
    </recommendedName>
    <alternativeName>
        <fullName evidence="1">50S ribosomal protein L33 2</fullName>
    </alternativeName>
</protein>
<reference key="1">
    <citation type="journal article" date="2004" name="Proc. Natl. Acad. Sci. U.S.A.">
        <title>Complete genomes of two clinical Staphylococcus aureus strains: evidence for the rapid evolution of virulence and drug resistance.</title>
        <authorList>
            <person name="Holden M.T.G."/>
            <person name="Feil E.J."/>
            <person name="Lindsay J.A."/>
            <person name="Peacock S.J."/>
            <person name="Day N.P.J."/>
            <person name="Enright M.C."/>
            <person name="Foster T.J."/>
            <person name="Moore C.E."/>
            <person name="Hurst L."/>
            <person name="Atkin R."/>
            <person name="Barron A."/>
            <person name="Bason N."/>
            <person name="Bentley S.D."/>
            <person name="Chillingworth C."/>
            <person name="Chillingworth T."/>
            <person name="Churcher C."/>
            <person name="Clark L."/>
            <person name="Corton C."/>
            <person name="Cronin A."/>
            <person name="Doggett J."/>
            <person name="Dowd L."/>
            <person name="Feltwell T."/>
            <person name="Hance Z."/>
            <person name="Harris B."/>
            <person name="Hauser H."/>
            <person name="Holroyd S."/>
            <person name="Jagels K."/>
            <person name="James K.D."/>
            <person name="Lennard N."/>
            <person name="Line A."/>
            <person name="Mayes R."/>
            <person name="Moule S."/>
            <person name="Mungall K."/>
            <person name="Ormond D."/>
            <person name="Quail M.A."/>
            <person name="Rabbinowitsch E."/>
            <person name="Rutherford K.M."/>
            <person name="Sanders M."/>
            <person name="Sharp S."/>
            <person name="Simmonds M."/>
            <person name="Stevens K."/>
            <person name="Whitehead S."/>
            <person name="Barrell B.G."/>
            <person name="Spratt B.G."/>
            <person name="Parkhill J."/>
        </authorList>
    </citation>
    <scope>NUCLEOTIDE SEQUENCE [LARGE SCALE GENOMIC DNA]</scope>
    <source>
        <strain>MSSA476</strain>
    </source>
</reference>
<feature type="chain" id="PRO_0000170223" description="Large ribosomal subunit protein bL33B">
    <location>
        <begin position="1"/>
        <end position="49"/>
    </location>
</feature>
<dbReference type="EMBL" id="BX571857">
    <property type="protein sequence ID" value="CAG43053.1"/>
    <property type="molecule type" value="Genomic_DNA"/>
</dbReference>
<dbReference type="SMR" id="Q6G9M3"/>
<dbReference type="KEGG" id="sas:SAS1275"/>
<dbReference type="HOGENOM" id="CLU_190949_0_2_9"/>
<dbReference type="GO" id="GO:0005737">
    <property type="term" value="C:cytoplasm"/>
    <property type="evidence" value="ECO:0007669"/>
    <property type="project" value="UniProtKB-ARBA"/>
</dbReference>
<dbReference type="GO" id="GO:1990904">
    <property type="term" value="C:ribonucleoprotein complex"/>
    <property type="evidence" value="ECO:0007669"/>
    <property type="project" value="UniProtKB-KW"/>
</dbReference>
<dbReference type="GO" id="GO:0005840">
    <property type="term" value="C:ribosome"/>
    <property type="evidence" value="ECO:0007669"/>
    <property type="project" value="UniProtKB-KW"/>
</dbReference>
<dbReference type="GO" id="GO:0003735">
    <property type="term" value="F:structural constituent of ribosome"/>
    <property type="evidence" value="ECO:0007669"/>
    <property type="project" value="InterPro"/>
</dbReference>
<dbReference type="GO" id="GO:0006412">
    <property type="term" value="P:translation"/>
    <property type="evidence" value="ECO:0007669"/>
    <property type="project" value="UniProtKB-UniRule"/>
</dbReference>
<dbReference type="Gene3D" id="2.20.28.120">
    <property type="entry name" value="Ribosomal protein L33"/>
    <property type="match status" value="1"/>
</dbReference>
<dbReference type="HAMAP" id="MF_00294">
    <property type="entry name" value="Ribosomal_bL33"/>
    <property type="match status" value="1"/>
</dbReference>
<dbReference type="InterPro" id="IPR001705">
    <property type="entry name" value="Ribosomal_bL33"/>
</dbReference>
<dbReference type="InterPro" id="IPR018264">
    <property type="entry name" value="Ribosomal_bL33_CS"/>
</dbReference>
<dbReference type="InterPro" id="IPR038584">
    <property type="entry name" value="Ribosomal_bL33_sf"/>
</dbReference>
<dbReference type="InterPro" id="IPR011332">
    <property type="entry name" value="Ribosomal_zn-bd"/>
</dbReference>
<dbReference type="NCBIfam" id="NF001764">
    <property type="entry name" value="PRK00504.1"/>
    <property type="match status" value="1"/>
</dbReference>
<dbReference type="NCBIfam" id="NF001860">
    <property type="entry name" value="PRK00595.1"/>
    <property type="match status" value="1"/>
</dbReference>
<dbReference type="NCBIfam" id="TIGR01023">
    <property type="entry name" value="rpmG_bact"/>
    <property type="match status" value="1"/>
</dbReference>
<dbReference type="PANTHER" id="PTHR43168">
    <property type="entry name" value="50S RIBOSOMAL PROTEIN L33, CHLOROPLASTIC"/>
    <property type="match status" value="1"/>
</dbReference>
<dbReference type="PANTHER" id="PTHR43168:SF2">
    <property type="entry name" value="LARGE RIBOSOMAL SUBUNIT PROTEIN BL33C"/>
    <property type="match status" value="1"/>
</dbReference>
<dbReference type="Pfam" id="PF00471">
    <property type="entry name" value="Ribosomal_L33"/>
    <property type="match status" value="1"/>
</dbReference>
<dbReference type="SUPFAM" id="SSF57829">
    <property type="entry name" value="Zn-binding ribosomal proteins"/>
    <property type="match status" value="1"/>
</dbReference>
<dbReference type="PROSITE" id="PS00582">
    <property type="entry name" value="RIBOSOMAL_L33"/>
    <property type="match status" value="1"/>
</dbReference>
<accession>Q6G9M3</accession>
<evidence type="ECO:0000255" key="1">
    <source>
        <dbReference type="HAMAP-Rule" id="MF_00294"/>
    </source>
</evidence>
<name>RL332_STAAS</name>
<sequence length="49" mass="5932">MRVNVTLACTECGDRNYITTKNKRNNPERIEMKKYCPRLNKYTLHRETK</sequence>
<organism>
    <name type="scientific">Staphylococcus aureus (strain MSSA476)</name>
    <dbReference type="NCBI Taxonomy" id="282459"/>
    <lineage>
        <taxon>Bacteria</taxon>
        <taxon>Bacillati</taxon>
        <taxon>Bacillota</taxon>
        <taxon>Bacilli</taxon>
        <taxon>Bacillales</taxon>
        <taxon>Staphylococcaceae</taxon>
        <taxon>Staphylococcus</taxon>
    </lineage>
</organism>